<dbReference type="EC" id="4.1.2.4" evidence="1"/>
<dbReference type="EMBL" id="CP000901">
    <property type="protein sequence ID" value="ABX87015.1"/>
    <property type="molecule type" value="Genomic_DNA"/>
</dbReference>
<dbReference type="RefSeq" id="WP_012229439.1">
    <property type="nucleotide sequence ID" value="NC_010159.1"/>
</dbReference>
<dbReference type="SMR" id="A9R4U4"/>
<dbReference type="KEGG" id="ypg:YpAngola_A1556"/>
<dbReference type="PATRIC" id="fig|349746.12.peg.2520"/>
<dbReference type="UniPathway" id="UPA00002">
    <property type="reaction ID" value="UER00468"/>
</dbReference>
<dbReference type="GO" id="GO:0005737">
    <property type="term" value="C:cytoplasm"/>
    <property type="evidence" value="ECO:0007669"/>
    <property type="project" value="UniProtKB-SubCell"/>
</dbReference>
<dbReference type="GO" id="GO:0004139">
    <property type="term" value="F:deoxyribose-phosphate aldolase activity"/>
    <property type="evidence" value="ECO:0007669"/>
    <property type="project" value="UniProtKB-UniRule"/>
</dbReference>
<dbReference type="GO" id="GO:0006018">
    <property type="term" value="P:2-deoxyribose 1-phosphate catabolic process"/>
    <property type="evidence" value="ECO:0007669"/>
    <property type="project" value="UniProtKB-UniRule"/>
</dbReference>
<dbReference type="GO" id="GO:0016052">
    <property type="term" value="P:carbohydrate catabolic process"/>
    <property type="evidence" value="ECO:0007669"/>
    <property type="project" value="TreeGrafter"/>
</dbReference>
<dbReference type="GO" id="GO:0009264">
    <property type="term" value="P:deoxyribonucleotide catabolic process"/>
    <property type="evidence" value="ECO:0007669"/>
    <property type="project" value="InterPro"/>
</dbReference>
<dbReference type="CDD" id="cd00959">
    <property type="entry name" value="DeoC"/>
    <property type="match status" value="1"/>
</dbReference>
<dbReference type="FunFam" id="3.20.20.70:FF:000044">
    <property type="entry name" value="Deoxyribose-phosphate aldolase"/>
    <property type="match status" value="1"/>
</dbReference>
<dbReference type="Gene3D" id="3.20.20.70">
    <property type="entry name" value="Aldolase class I"/>
    <property type="match status" value="1"/>
</dbReference>
<dbReference type="HAMAP" id="MF_00114">
    <property type="entry name" value="DeoC_type1"/>
    <property type="match status" value="1"/>
</dbReference>
<dbReference type="InterPro" id="IPR013785">
    <property type="entry name" value="Aldolase_TIM"/>
</dbReference>
<dbReference type="InterPro" id="IPR011343">
    <property type="entry name" value="DeoC"/>
</dbReference>
<dbReference type="InterPro" id="IPR002915">
    <property type="entry name" value="DeoC/FbaB/LacD_aldolase"/>
</dbReference>
<dbReference type="InterPro" id="IPR028581">
    <property type="entry name" value="DeoC_typeI"/>
</dbReference>
<dbReference type="NCBIfam" id="TIGR00126">
    <property type="entry name" value="deoC"/>
    <property type="match status" value="1"/>
</dbReference>
<dbReference type="PANTHER" id="PTHR10889">
    <property type="entry name" value="DEOXYRIBOSE-PHOSPHATE ALDOLASE"/>
    <property type="match status" value="1"/>
</dbReference>
<dbReference type="PANTHER" id="PTHR10889:SF1">
    <property type="entry name" value="DEOXYRIBOSE-PHOSPHATE ALDOLASE"/>
    <property type="match status" value="1"/>
</dbReference>
<dbReference type="Pfam" id="PF01791">
    <property type="entry name" value="DeoC"/>
    <property type="match status" value="1"/>
</dbReference>
<dbReference type="PIRSF" id="PIRSF001357">
    <property type="entry name" value="DeoC"/>
    <property type="match status" value="1"/>
</dbReference>
<dbReference type="SMART" id="SM01133">
    <property type="entry name" value="DeoC"/>
    <property type="match status" value="1"/>
</dbReference>
<dbReference type="SUPFAM" id="SSF51569">
    <property type="entry name" value="Aldolase"/>
    <property type="match status" value="1"/>
</dbReference>
<organism>
    <name type="scientific">Yersinia pestis bv. Antiqua (strain Angola)</name>
    <dbReference type="NCBI Taxonomy" id="349746"/>
    <lineage>
        <taxon>Bacteria</taxon>
        <taxon>Pseudomonadati</taxon>
        <taxon>Pseudomonadota</taxon>
        <taxon>Gammaproteobacteria</taxon>
        <taxon>Enterobacterales</taxon>
        <taxon>Yersiniaceae</taxon>
        <taxon>Yersinia</taxon>
    </lineage>
</organism>
<accession>A9R4U4</accession>
<sequence length="223" mass="23294">MTTNYAHYIDHTLLAMDATEAQIIKLCEEAKQHHFYAVCVNSGYVPVVAQQLAGSSVKVCSVIGFPLGAGLTAAKAFEAQAAINAGAQEIDMVINVGWLKSGKIADVKADIKAVRDNCAATPLKVILETCLLSDEQIVQVCEMCRELDVAFVKTSTGFSTGGAKEEHVKLMRATVGPVMGVKASGAVRDRATAETMIQAGATRIGTSSGVAIVSGQQAAASGY</sequence>
<evidence type="ECO:0000255" key="1">
    <source>
        <dbReference type="HAMAP-Rule" id="MF_00114"/>
    </source>
</evidence>
<comment type="function">
    <text evidence="1">Catalyzes a reversible aldol reaction between acetaldehyde and D-glyceraldehyde 3-phosphate to generate 2-deoxy-D-ribose 5-phosphate.</text>
</comment>
<comment type="catalytic activity">
    <reaction evidence="1">
        <text>2-deoxy-D-ribose 5-phosphate = D-glyceraldehyde 3-phosphate + acetaldehyde</text>
        <dbReference type="Rhea" id="RHEA:12821"/>
        <dbReference type="ChEBI" id="CHEBI:15343"/>
        <dbReference type="ChEBI" id="CHEBI:59776"/>
        <dbReference type="ChEBI" id="CHEBI:62877"/>
        <dbReference type="EC" id="4.1.2.4"/>
    </reaction>
</comment>
<comment type="pathway">
    <text evidence="1">Carbohydrate degradation; 2-deoxy-D-ribose 1-phosphate degradation; D-glyceraldehyde 3-phosphate and acetaldehyde from 2-deoxy-alpha-D-ribose 1-phosphate: step 2/2.</text>
</comment>
<comment type="subcellular location">
    <subcellularLocation>
        <location evidence="1">Cytoplasm</location>
    </subcellularLocation>
</comment>
<comment type="similarity">
    <text evidence="1">Belongs to the DeoC/FbaB aldolase family. DeoC type 1 subfamily.</text>
</comment>
<gene>
    <name evidence="1" type="primary">deoC</name>
    <name type="ordered locus">YpAngola_A1556</name>
</gene>
<protein>
    <recommendedName>
        <fullName evidence="1">Deoxyribose-phosphate aldolase</fullName>
        <shortName evidence="1">DERA</shortName>
        <ecNumber evidence="1">4.1.2.4</ecNumber>
    </recommendedName>
    <alternativeName>
        <fullName evidence="1">2-deoxy-D-ribose 5-phosphate aldolase</fullName>
    </alternativeName>
    <alternativeName>
        <fullName evidence="1">Phosphodeoxyriboaldolase</fullName>
        <shortName evidence="1">Deoxyriboaldolase</shortName>
    </alternativeName>
</protein>
<feature type="chain" id="PRO_1000094868" description="Deoxyribose-phosphate aldolase">
    <location>
        <begin position="1"/>
        <end position="223"/>
    </location>
</feature>
<feature type="active site" description="Proton donor/acceptor" evidence="1">
    <location>
        <position position="91"/>
    </location>
</feature>
<feature type="active site" description="Schiff-base intermediate with acetaldehyde" evidence="1">
    <location>
        <position position="153"/>
    </location>
</feature>
<feature type="active site" description="Proton donor/acceptor" evidence="1">
    <location>
        <position position="182"/>
    </location>
</feature>
<reference key="1">
    <citation type="journal article" date="2010" name="J. Bacteriol.">
        <title>Genome sequence of the deep-rooted Yersinia pestis strain Angola reveals new insights into the evolution and pangenome of the plague bacterium.</title>
        <authorList>
            <person name="Eppinger M."/>
            <person name="Worsham P.L."/>
            <person name="Nikolich M.P."/>
            <person name="Riley D.R."/>
            <person name="Sebastian Y."/>
            <person name="Mou S."/>
            <person name="Achtman M."/>
            <person name="Lindler L.E."/>
            <person name="Ravel J."/>
        </authorList>
    </citation>
    <scope>NUCLEOTIDE SEQUENCE [LARGE SCALE GENOMIC DNA]</scope>
    <source>
        <strain>Angola</strain>
    </source>
</reference>
<proteinExistence type="inferred from homology"/>
<keyword id="KW-0963">Cytoplasm</keyword>
<keyword id="KW-0456">Lyase</keyword>
<keyword id="KW-0704">Schiff base</keyword>
<name>DEOC_YERPG</name>